<accession>A5I9V1</accession>
<organism>
    <name type="scientific">Legionella pneumophila (strain Corby)</name>
    <dbReference type="NCBI Taxonomy" id="400673"/>
    <lineage>
        <taxon>Bacteria</taxon>
        <taxon>Pseudomonadati</taxon>
        <taxon>Pseudomonadota</taxon>
        <taxon>Gammaproteobacteria</taxon>
        <taxon>Legionellales</taxon>
        <taxon>Legionellaceae</taxon>
        <taxon>Legionella</taxon>
    </lineage>
</organism>
<feature type="chain" id="PRO_1000008579" description="4-hydroxy-tetrahydrodipicolinate reductase">
    <location>
        <begin position="1"/>
        <end position="243"/>
    </location>
</feature>
<feature type="active site" description="Proton donor/acceptor" evidence="1">
    <location>
        <position position="134"/>
    </location>
</feature>
<feature type="active site" description="Proton donor" evidence="1">
    <location>
        <position position="138"/>
    </location>
</feature>
<feature type="binding site" evidence="1">
    <location>
        <begin position="9"/>
        <end position="14"/>
    </location>
    <ligand>
        <name>NAD(+)</name>
        <dbReference type="ChEBI" id="CHEBI:57540"/>
    </ligand>
</feature>
<feature type="binding site" evidence="1">
    <location>
        <begin position="78"/>
        <end position="80"/>
    </location>
    <ligand>
        <name>NAD(+)</name>
        <dbReference type="ChEBI" id="CHEBI:57540"/>
    </ligand>
</feature>
<feature type="binding site" evidence="1">
    <location>
        <begin position="104"/>
        <end position="107"/>
    </location>
    <ligand>
        <name>NAD(+)</name>
        <dbReference type="ChEBI" id="CHEBI:57540"/>
    </ligand>
</feature>
<feature type="binding site" evidence="1">
    <location>
        <position position="135"/>
    </location>
    <ligand>
        <name>(S)-2,3,4,5-tetrahydrodipicolinate</name>
        <dbReference type="ChEBI" id="CHEBI:16845"/>
    </ligand>
</feature>
<feature type="binding site" evidence="1">
    <location>
        <begin position="144"/>
        <end position="145"/>
    </location>
    <ligand>
        <name>(S)-2,3,4,5-tetrahydrodipicolinate</name>
        <dbReference type="ChEBI" id="CHEBI:16845"/>
    </ligand>
</feature>
<sequence length="243" mass="26501">MRTRVIVNGANGKMGILACETLENHEQFEVVAKLSRQDNLGQSILDTKAQIVVDLTRADCVYENSLTIINHGARPVIGTSGLVETQIDELTKLCEIKQIGGIIAPNFSLGAILMMMLATKASEYFSEVEIIEGHHQQKLDAPSGTALKTAEMIAAARKKPKNKLPLKELTPGARGGSHHDINIHSLRLPGLLARQEVLFGNIGETLSITHNSIDRHCFMPGIVLACQKVLNLTNLVYGLEHLL</sequence>
<protein>
    <recommendedName>
        <fullName evidence="1">4-hydroxy-tetrahydrodipicolinate reductase</fullName>
        <shortName evidence="1">HTPA reductase</shortName>
        <ecNumber evidence="1">1.17.1.8</ecNumber>
    </recommendedName>
</protein>
<comment type="function">
    <text evidence="1">Catalyzes the conversion of 4-hydroxy-tetrahydrodipicolinate (HTPA) to tetrahydrodipicolinate.</text>
</comment>
<comment type="catalytic activity">
    <reaction evidence="1">
        <text>(S)-2,3,4,5-tetrahydrodipicolinate + NAD(+) + H2O = (2S,4S)-4-hydroxy-2,3,4,5-tetrahydrodipicolinate + NADH + H(+)</text>
        <dbReference type="Rhea" id="RHEA:35323"/>
        <dbReference type="ChEBI" id="CHEBI:15377"/>
        <dbReference type="ChEBI" id="CHEBI:15378"/>
        <dbReference type="ChEBI" id="CHEBI:16845"/>
        <dbReference type="ChEBI" id="CHEBI:57540"/>
        <dbReference type="ChEBI" id="CHEBI:57945"/>
        <dbReference type="ChEBI" id="CHEBI:67139"/>
        <dbReference type="EC" id="1.17.1.8"/>
    </reaction>
</comment>
<comment type="catalytic activity">
    <reaction evidence="1">
        <text>(S)-2,3,4,5-tetrahydrodipicolinate + NADP(+) + H2O = (2S,4S)-4-hydroxy-2,3,4,5-tetrahydrodipicolinate + NADPH + H(+)</text>
        <dbReference type="Rhea" id="RHEA:35331"/>
        <dbReference type="ChEBI" id="CHEBI:15377"/>
        <dbReference type="ChEBI" id="CHEBI:15378"/>
        <dbReference type="ChEBI" id="CHEBI:16845"/>
        <dbReference type="ChEBI" id="CHEBI:57783"/>
        <dbReference type="ChEBI" id="CHEBI:58349"/>
        <dbReference type="ChEBI" id="CHEBI:67139"/>
        <dbReference type="EC" id="1.17.1.8"/>
    </reaction>
</comment>
<comment type="pathway">
    <text evidence="1">Amino-acid biosynthesis; L-lysine biosynthesis via DAP pathway; (S)-tetrahydrodipicolinate from L-aspartate: step 4/4.</text>
</comment>
<comment type="subcellular location">
    <subcellularLocation>
        <location evidence="1">Cytoplasm</location>
    </subcellularLocation>
</comment>
<comment type="similarity">
    <text evidence="1">Belongs to the DapB family.</text>
</comment>
<comment type="caution">
    <text evidence="2">Was originally thought to be a dihydrodipicolinate reductase (DHDPR), catalyzing the conversion of dihydrodipicolinate to tetrahydrodipicolinate. However, it was shown in E.coli that the substrate of the enzymatic reaction is not dihydrodipicolinate (DHDP) but in fact (2S,4S)-4-hydroxy-2,3,4,5-tetrahydrodipicolinic acid (HTPA), the product released by the DapA-catalyzed reaction.</text>
</comment>
<evidence type="ECO:0000255" key="1">
    <source>
        <dbReference type="HAMAP-Rule" id="MF_00102"/>
    </source>
</evidence>
<evidence type="ECO:0000305" key="2"/>
<name>DAPB_LEGPC</name>
<reference key="1">
    <citation type="submission" date="2006-11" db="EMBL/GenBank/DDBJ databases">
        <title>Identification and characterization of a new conjugation/ type IVA secretion system (trb/tra) of L. pneumophila Corby localized on a mobile genomic island.</title>
        <authorList>
            <person name="Gloeckner G."/>
            <person name="Albert-Weissenberger C."/>
            <person name="Weinmann E."/>
            <person name="Jacobi S."/>
            <person name="Schunder E."/>
            <person name="Steinert M."/>
            <person name="Buchrieser C."/>
            <person name="Hacker J."/>
            <person name="Heuner K."/>
        </authorList>
    </citation>
    <scope>NUCLEOTIDE SEQUENCE [LARGE SCALE GENOMIC DNA]</scope>
    <source>
        <strain>Corby</strain>
    </source>
</reference>
<proteinExistence type="inferred from homology"/>
<gene>
    <name evidence="1" type="primary">dapB</name>
    <name type="ordered locus">LPC_0152</name>
</gene>
<dbReference type="EC" id="1.17.1.8" evidence="1"/>
<dbReference type="EMBL" id="CP000675">
    <property type="protein sequence ID" value="ABQ54151.1"/>
    <property type="molecule type" value="Genomic_DNA"/>
</dbReference>
<dbReference type="RefSeq" id="WP_011945328.1">
    <property type="nucleotide sequence ID" value="NZ_JAPMSS010000003.1"/>
</dbReference>
<dbReference type="SMR" id="A5I9V1"/>
<dbReference type="KEGG" id="lpc:LPC_0152"/>
<dbReference type="HOGENOM" id="CLU_047479_0_1_6"/>
<dbReference type="UniPathway" id="UPA00034">
    <property type="reaction ID" value="UER00018"/>
</dbReference>
<dbReference type="GO" id="GO:0005829">
    <property type="term" value="C:cytosol"/>
    <property type="evidence" value="ECO:0007669"/>
    <property type="project" value="TreeGrafter"/>
</dbReference>
<dbReference type="GO" id="GO:0008839">
    <property type="term" value="F:4-hydroxy-tetrahydrodipicolinate reductase"/>
    <property type="evidence" value="ECO:0007669"/>
    <property type="project" value="UniProtKB-EC"/>
</dbReference>
<dbReference type="GO" id="GO:0051287">
    <property type="term" value="F:NAD binding"/>
    <property type="evidence" value="ECO:0007669"/>
    <property type="project" value="UniProtKB-UniRule"/>
</dbReference>
<dbReference type="GO" id="GO:0050661">
    <property type="term" value="F:NADP binding"/>
    <property type="evidence" value="ECO:0007669"/>
    <property type="project" value="UniProtKB-UniRule"/>
</dbReference>
<dbReference type="GO" id="GO:0016726">
    <property type="term" value="F:oxidoreductase activity, acting on CH or CH2 groups, NAD or NADP as acceptor"/>
    <property type="evidence" value="ECO:0007669"/>
    <property type="project" value="UniProtKB-UniRule"/>
</dbReference>
<dbReference type="GO" id="GO:0019877">
    <property type="term" value="P:diaminopimelate biosynthetic process"/>
    <property type="evidence" value="ECO:0007669"/>
    <property type="project" value="UniProtKB-UniRule"/>
</dbReference>
<dbReference type="GO" id="GO:0009089">
    <property type="term" value="P:lysine biosynthetic process via diaminopimelate"/>
    <property type="evidence" value="ECO:0007669"/>
    <property type="project" value="UniProtKB-UniRule"/>
</dbReference>
<dbReference type="CDD" id="cd02274">
    <property type="entry name" value="DHDPR_N"/>
    <property type="match status" value="1"/>
</dbReference>
<dbReference type="FunFam" id="3.30.360.10:FF:000009">
    <property type="entry name" value="4-hydroxy-tetrahydrodipicolinate reductase"/>
    <property type="match status" value="1"/>
</dbReference>
<dbReference type="Gene3D" id="3.30.360.10">
    <property type="entry name" value="Dihydrodipicolinate Reductase, domain 2"/>
    <property type="match status" value="1"/>
</dbReference>
<dbReference type="Gene3D" id="3.40.50.720">
    <property type="entry name" value="NAD(P)-binding Rossmann-like Domain"/>
    <property type="match status" value="1"/>
</dbReference>
<dbReference type="HAMAP" id="MF_00102">
    <property type="entry name" value="DapB"/>
    <property type="match status" value="1"/>
</dbReference>
<dbReference type="InterPro" id="IPR022663">
    <property type="entry name" value="DapB_C"/>
</dbReference>
<dbReference type="InterPro" id="IPR000846">
    <property type="entry name" value="DapB_N"/>
</dbReference>
<dbReference type="InterPro" id="IPR022664">
    <property type="entry name" value="DapB_N_CS"/>
</dbReference>
<dbReference type="InterPro" id="IPR023940">
    <property type="entry name" value="DHDPR_bac"/>
</dbReference>
<dbReference type="InterPro" id="IPR036291">
    <property type="entry name" value="NAD(P)-bd_dom_sf"/>
</dbReference>
<dbReference type="NCBIfam" id="TIGR00036">
    <property type="entry name" value="dapB"/>
    <property type="match status" value="1"/>
</dbReference>
<dbReference type="PANTHER" id="PTHR20836:SF0">
    <property type="entry name" value="4-HYDROXY-TETRAHYDRODIPICOLINATE REDUCTASE 1, CHLOROPLASTIC-RELATED"/>
    <property type="match status" value="1"/>
</dbReference>
<dbReference type="PANTHER" id="PTHR20836">
    <property type="entry name" value="DIHYDRODIPICOLINATE REDUCTASE"/>
    <property type="match status" value="1"/>
</dbReference>
<dbReference type="Pfam" id="PF05173">
    <property type="entry name" value="DapB_C"/>
    <property type="match status" value="1"/>
</dbReference>
<dbReference type="Pfam" id="PF01113">
    <property type="entry name" value="DapB_N"/>
    <property type="match status" value="1"/>
</dbReference>
<dbReference type="PIRSF" id="PIRSF000161">
    <property type="entry name" value="DHPR"/>
    <property type="match status" value="1"/>
</dbReference>
<dbReference type="SUPFAM" id="SSF55347">
    <property type="entry name" value="Glyceraldehyde-3-phosphate dehydrogenase-like, C-terminal domain"/>
    <property type="match status" value="1"/>
</dbReference>
<dbReference type="SUPFAM" id="SSF51735">
    <property type="entry name" value="NAD(P)-binding Rossmann-fold domains"/>
    <property type="match status" value="1"/>
</dbReference>
<dbReference type="PROSITE" id="PS01298">
    <property type="entry name" value="DAPB"/>
    <property type="match status" value="1"/>
</dbReference>
<keyword id="KW-0028">Amino-acid biosynthesis</keyword>
<keyword id="KW-0963">Cytoplasm</keyword>
<keyword id="KW-0220">Diaminopimelate biosynthesis</keyword>
<keyword id="KW-0457">Lysine biosynthesis</keyword>
<keyword id="KW-0520">NAD</keyword>
<keyword id="KW-0521">NADP</keyword>
<keyword id="KW-0560">Oxidoreductase</keyword>